<proteinExistence type="inferred from homology"/>
<keyword id="KW-0145">Chemotaxis</keyword>
<keyword id="KW-0164">Citrullination</keyword>
<keyword id="KW-0202">Cytokine</keyword>
<keyword id="KW-1015">Disulfide bond</keyword>
<keyword id="KW-0395">Inflammatory response</keyword>
<keyword id="KW-1185">Reference proteome</keyword>
<keyword id="KW-0964">Secreted</keyword>
<keyword id="KW-0732">Signal</keyword>
<dbReference type="EMBL" id="AB183191">
    <property type="protein sequence ID" value="BAD83839.1"/>
    <property type="molecule type" value="mRNA"/>
</dbReference>
<dbReference type="RefSeq" id="NP_001010949.1">
    <property type="nucleotide sequence ID" value="NM_001010949.1"/>
</dbReference>
<dbReference type="SMR" id="Q5KSV9"/>
<dbReference type="FunCoup" id="Q5KSV9">
    <property type="interactions" value="355"/>
</dbReference>
<dbReference type="STRING" id="9615.ENSCAFP00000032015"/>
<dbReference type="PaxDb" id="9612-ENSCAFP00000032015"/>
<dbReference type="Ensembl" id="ENSCAFT00000036612.4">
    <property type="protein sequence ID" value="ENSCAFP00000032015.2"/>
    <property type="gene ID" value="ENSCAFG00000008584.5"/>
</dbReference>
<dbReference type="Ensembl" id="ENSCAFT00030026099.1">
    <property type="protein sequence ID" value="ENSCAFP00030022791.1"/>
    <property type="gene ID" value="ENSCAFG00030014095.1"/>
</dbReference>
<dbReference type="Ensembl" id="ENSCAFT00040044270.1">
    <property type="protein sequence ID" value="ENSCAFP00040038650.1"/>
    <property type="gene ID" value="ENSCAFG00040023780.1"/>
</dbReference>
<dbReference type="Ensembl" id="ENSCAFT00845052887.1">
    <property type="protein sequence ID" value="ENSCAFP00845041528.1"/>
    <property type="gene ID" value="ENSCAFG00845029862.1"/>
</dbReference>
<dbReference type="GeneID" id="478432"/>
<dbReference type="KEGG" id="cfa:478432"/>
<dbReference type="CTD" id="3627"/>
<dbReference type="VEuPathDB" id="HostDB:ENSCAFG00845029862"/>
<dbReference type="VGNC" id="VGNC:49645">
    <property type="gene designation" value="CXCL10"/>
</dbReference>
<dbReference type="eggNOG" id="ENOG502S7MM">
    <property type="taxonomic scope" value="Eukaryota"/>
</dbReference>
<dbReference type="GeneTree" id="ENSGT00940000161759"/>
<dbReference type="HOGENOM" id="CLU_143902_2_2_1"/>
<dbReference type="InParanoid" id="Q5KSV9"/>
<dbReference type="OMA" id="RNIRCRC"/>
<dbReference type="OrthoDB" id="9948647at2759"/>
<dbReference type="TreeFam" id="TF333433"/>
<dbReference type="Reactome" id="R-CFA-380108">
    <property type="pathway name" value="Chemokine receptors bind chemokines"/>
</dbReference>
<dbReference type="Reactome" id="R-CFA-418594">
    <property type="pathway name" value="G alpha (i) signalling events"/>
</dbReference>
<dbReference type="Proteomes" id="UP000002254">
    <property type="component" value="Chromosome 32"/>
</dbReference>
<dbReference type="Proteomes" id="UP000694429">
    <property type="component" value="Chromosome 32"/>
</dbReference>
<dbReference type="Proteomes" id="UP000694542">
    <property type="component" value="Chromosome 32"/>
</dbReference>
<dbReference type="Proteomes" id="UP000805418">
    <property type="component" value="Chromosome 32"/>
</dbReference>
<dbReference type="Bgee" id="ENSCAFG00000008584">
    <property type="expression patterns" value="Expressed in cardiac muscle of left ventricle and 43 other cell types or tissues"/>
</dbReference>
<dbReference type="GO" id="GO:0009897">
    <property type="term" value="C:external side of plasma membrane"/>
    <property type="evidence" value="ECO:0007669"/>
    <property type="project" value="Ensembl"/>
</dbReference>
<dbReference type="GO" id="GO:0005615">
    <property type="term" value="C:extracellular space"/>
    <property type="evidence" value="ECO:0000318"/>
    <property type="project" value="GO_Central"/>
</dbReference>
<dbReference type="GO" id="GO:0042056">
    <property type="term" value="F:chemoattractant activity"/>
    <property type="evidence" value="ECO:0007669"/>
    <property type="project" value="Ensembl"/>
</dbReference>
<dbReference type="GO" id="GO:0008009">
    <property type="term" value="F:chemokine activity"/>
    <property type="evidence" value="ECO:0000250"/>
    <property type="project" value="UniProtKB"/>
</dbReference>
<dbReference type="GO" id="GO:0045236">
    <property type="term" value="F:CXCR chemokine receptor binding"/>
    <property type="evidence" value="ECO:0000318"/>
    <property type="project" value="GO_Central"/>
</dbReference>
<dbReference type="GO" id="GO:0048248">
    <property type="term" value="F:CXCR3 chemokine receptor binding"/>
    <property type="evidence" value="ECO:0000250"/>
    <property type="project" value="UniProtKB"/>
</dbReference>
<dbReference type="GO" id="GO:0008201">
    <property type="term" value="F:heparin binding"/>
    <property type="evidence" value="ECO:0007669"/>
    <property type="project" value="Ensembl"/>
</dbReference>
<dbReference type="GO" id="GO:0007189">
    <property type="term" value="P:adenylate cyclase-activating G protein-coupled receptor signaling pathway"/>
    <property type="evidence" value="ECO:0000250"/>
    <property type="project" value="UniProtKB"/>
</dbReference>
<dbReference type="GO" id="GO:0140374">
    <property type="term" value="P:antiviral innate immune response"/>
    <property type="evidence" value="ECO:0007669"/>
    <property type="project" value="Ensembl"/>
</dbReference>
<dbReference type="GO" id="GO:0097398">
    <property type="term" value="P:cellular response to interleukin-17"/>
    <property type="evidence" value="ECO:0007669"/>
    <property type="project" value="Ensembl"/>
</dbReference>
<dbReference type="GO" id="GO:0071222">
    <property type="term" value="P:cellular response to lipopolysaccharide"/>
    <property type="evidence" value="ECO:0000318"/>
    <property type="project" value="GO_Central"/>
</dbReference>
<dbReference type="GO" id="GO:0098586">
    <property type="term" value="P:cellular response to virus"/>
    <property type="evidence" value="ECO:0007669"/>
    <property type="project" value="Ensembl"/>
</dbReference>
<dbReference type="GO" id="GO:0070098">
    <property type="term" value="P:chemokine-mediated signaling pathway"/>
    <property type="evidence" value="ECO:0000318"/>
    <property type="project" value="GO_Central"/>
</dbReference>
<dbReference type="GO" id="GO:0006935">
    <property type="term" value="P:chemotaxis"/>
    <property type="evidence" value="ECO:0000250"/>
    <property type="project" value="UniProtKB"/>
</dbReference>
<dbReference type="GO" id="GO:0042118">
    <property type="term" value="P:endothelial cell activation"/>
    <property type="evidence" value="ECO:0007669"/>
    <property type="project" value="Ensembl"/>
</dbReference>
<dbReference type="GO" id="GO:0007186">
    <property type="term" value="P:G protein-coupled receptor signaling pathway"/>
    <property type="evidence" value="ECO:0000250"/>
    <property type="project" value="UniProtKB"/>
</dbReference>
<dbReference type="GO" id="GO:0006954">
    <property type="term" value="P:inflammatory response"/>
    <property type="evidence" value="ECO:0000318"/>
    <property type="project" value="GO_Central"/>
</dbReference>
<dbReference type="GO" id="GO:0016525">
    <property type="term" value="P:negative regulation of angiogenesis"/>
    <property type="evidence" value="ECO:0007669"/>
    <property type="project" value="Ensembl"/>
</dbReference>
<dbReference type="GO" id="GO:0045662">
    <property type="term" value="P:negative regulation of myoblast differentiation"/>
    <property type="evidence" value="ECO:0007669"/>
    <property type="project" value="Ensembl"/>
</dbReference>
<dbReference type="GO" id="GO:1901740">
    <property type="term" value="P:negative regulation of myoblast fusion"/>
    <property type="evidence" value="ECO:0007669"/>
    <property type="project" value="Ensembl"/>
</dbReference>
<dbReference type="GO" id="GO:0030593">
    <property type="term" value="P:neutrophil chemotaxis"/>
    <property type="evidence" value="ECO:0000318"/>
    <property type="project" value="GO_Central"/>
</dbReference>
<dbReference type="GO" id="GO:0090026">
    <property type="term" value="P:positive regulation of monocyte chemotaxis"/>
    <property type="evidence" value="ECO:0007669"/>
    <property type="project" value="Ensembl"/>
</dbReference>
<dbReference type="GO" id="GO:0051281">
    <property type="term" value="P:positive regulation of release of sequestered calcium ion into cytosol"/>
    <property type="evidence" value="ECO:0000250"/>
    <property type="project" value="UniProtKB"/>
</dbReference>
<dbReference type="GO" id="GO:2000406">
    <property type="term" value="P:positive regulation of T cell migration"/>
    <property type="evidence" value="ECO:0007669"/>
    <property type="project" value="Ensembl"/>
</dbReference>
<dbReference type="GO" id="GO:0042981">
    <property type="term" value="P:regulation of apoptotic process"/>
    <property type="evidence" value="ECO:0007669"/>
    <property type="project" value="Ensembl"/>
</dbReference>
<dbReference type="GO" id="GO:0042127">
    <property type="term" value="P:regulation of cell population proliferation"/>
    <property type="evidence" value="ECO:0000250"/>
    <property type="project" value="UniProtKB"/>
</dbReference>
<dbReference type="GO" id="GO:1901509">
    <property type="term" value="P:regulation of endothelial tube morphogenesis"/>
    <property type="evidence" value="ECO:0007669"/>
    <property type="project" value="Ensembl"/>
</dbReference>
<dbReference type="GO" id="GO:0010819">
    <property type="term" value="P:regulation of T cell chemotaxis"/>
    <property type="evidence" value="ECO:0007669"/>
    <property type="project" value="Ensembl"/>
</dbReference>
<dbReference type="GO" id="GO:0010818">
    <property type="term" value="P:T cell chemotaxis"/>
    <property type="evidence" value="ECO:0007669"/>
    <property type="project" value="Ensembl"/>
</dbReference>
<dbReference type="CDD" id="cd00273">
    <property type="entry name" value="Chemokine_CXC"/>
    <property type="match status" value="1"/>
</dbReference>
<dbReference type="FunFam" id="2.40.50.40:FF:000004">
    <property type="entry name" value="C-X-C motif chemokine"/>
    <property type="match status" value="1"/>
</dbReference>
<dbReference type="Gene3D" id="2.40.50.40">
    <property type="match status" value="1"/>
</dbReference>
<dbReference type="InterPro" id="IPR039809">
    <property type="entry name" value="Chemokine_b/g/d"/>
</dbReference>
<dbReference type="InterPro" id="IPR001089">
    <property type="entry name" value="Chemokine_CXC"/>
</dbReference>
<dbReference type="InterPro" id="IPR018048">
    <property type="entry name" value="Chemokine_CXC_CS"/>
</dbReference>
<dbReference type="InterPro" id="IPR001811">
    <property type="entry name" value="Chemokine_IL8-like_dom"/>
</dbReference>
<dbReference type="InterPro" id="IPR033899">
    <property type="entry name" value="CXC_Chemokine_domain"/>
</dbReference>
<dbReference type="InterPro" id="IPR036048">
    <property type="entry name" value="Interleukin_8-like_sf"/>
</dbReference>
<dbReference type="PANTHER" id="PTHR12015:SF188">
    <property type="entry name" value="C-X-C MOTIF CHEMOKINE 10"/>
    <property type="match status" value="1"/>
</dbReference>
<dbReference type="PANTHER" id="PTHR12015">
    <property type="entry name" value="SMALL INDUCIBLE CYTOKINE A"/>
    <property type="match status" value="1"/>
</dbReference>
<dbReference type="Pfam" id="PF00048">
    <property type="entry name" value="IL8"/>
    <property type="match status" value="1"/>
</dbReference>
<dbReference type="PRINTS" id="PR00437">
    <property type="entry name" value="SMALLCYTKCXC"/>
</dbReference>
<dbReference type="SMART" id="SM00199">
    <property type="entry name" value="SCY"/>
    <property type="match status" value="1"/>
</dbReference>
<dbReference type="SUPFAM" id="SSF54117">
    <property type="entry name" value="Interleukin 8-like chemokines"/>
    <property type="match status" value="1"/>
</dbReference>
<dbReference type="PROSITE" id="PS00471">
    <property type="entry name" value="SMALL_CYTOKINES_CXC"/>
    <property type="match status" value="1"/>
</dbReference>
<gene>
    <name type="primary">CXCL10</name>
</gene>
<organism>
    <name type="scientific">Canis lupus familiaris</name>
    <name type="common">Dog</name>
    <name type="synonym">Canis familiaris</name>
    <dbReference type="NCBI Taxonomy" id="9615"/>
    <lineage>
        <taxon>Eukaryota</taxon>
        <taxon>Metazoa</taxon>
        <taxon>Chordata</taxon>
        <taxon>Craniata</taxon>
        <taxon>Vertebrata</taxon>
        <taxon>Euteleostomi</taxon>
        <taxon>Mammalia</taxon>
        <taxon>Eutheria</taxon>
        <taxon>Laurasiatheria</taxon>
        <taxon>Carnivora</taxon>
        <taxon>Caniformia</taxon>
        <taxon>Canidae</taxon>
        <taxon>Canis</taxon>
    </lineage>
</organism>
<accession>Q5KSV9</accession>
<evidence type="ECO:0000250" key="1"/>
<evidence type="ECO:0000250" key="2">
    <source>
        <dbReference type="UniProtKB" id="P02778"/>
    </source>
</evidence>
<evidence type="ECO:0000250" key="3">
    <source>
        <dbReference type="UniProtKB" id="P17515"/>
    </source>
</evidence>
<evidence type="ECO:0000305" key="4"/>
<name>CXL10_CANLF</name>
<feature type="signal peptide" evidence="1">
    <location>
        <begin position="1"/>
        <end position="21"/>
    </location>
</feature>
<feature type="chain" id="PRO_0000045827" description="C-X-C motif chemokine 10">
    <location>
        <begin position="22"/>
        <end position="98"/>
    </location>
</feature>
<feature type="modified residue" description="Citrulline" evidence="2">
    <location>
        <position position="26"/>
    </location>
</feature>
<feature type="disulfide bond" evidence="2">
    <location>
        <begin position="30"/>
        <end position="57"/>
    </location>
</feature>
<feature type="disulfide bond" evidence="2">
    <location>
        <begin position="32"/>
        <end position="74"/>
    </location>
</feature>
<sequence length="98" mass="10895">MNQSAVLIFCLIFLTLNGTQGIPLSRTIRCTCIKISDQPVNLRSLEKIEMIPASPSCPHVEIIATMKKSGEKRCLNPESKTIKSLVKAISKKRSRRSP</sequence>
<reference key="1">
    <citation type="submission" date="2004-07" db="EMBL/GenBank/DDBJ databases">
        <title>Expression analysis of CXCL10 gene in canine atopic dermatitis.</title>
        <authorList>
            <person name="Tsukui T."/>
            <person name="Maeda S."/>
            <person name="Koyanagi M."/>
            <person name="Hashimoto R."/>
            <person name="Masuda K."/>
            <person name="Ohno K."/>
            <person name="Sakaguchi M."/>
            <person name="Tsujimoto H."/>
            <person name="Iwabuchi S."/>
        </authorList>
    </citation>
    <scope>NUCLEOTIDE SEQUENCE [MRNA]</scope>
</reference>
<protein>
    <recommendedName>
        <fullName>C-X-C motif chemokine 10</fullName>
    </recommendedName>
    <alternativeName>
        <fullName>Small-inducible cytokine B10</fullName>
    </alternativeName>
</protein>
<comment type="function">
    <text evidence="2 3">Pro-inflammatory cytokine that is involved in a wide variety of processes such as chemotaxis, differentiation, and activation of peripheral immune cells, regulation of cell growth, apoptosis and modulation of angiostatic effects (By similarity). Plays thereby an important role during viral infections by stimulating the activation and migration of immune cells to the infected sites (By similarity). Mechanistically, binding of CXCL10 to the CXCR3 receptor activates G protein-mediated signaling and results in downstream activation of phospholipase C-dependent pathway, an increase in intracellular calcium production and actin reorganization. In turn, recruitment of activated Th1 lymphocytes occurs at sites of inflammation (By similarity). Activation of the CXCL10/CXCR3 axis also plays an important role in neurons in response to brain injury for activating microglia, the resident macrophage population of the central nervous system, and directing them to the lesion site. This recruitment is an essential element for neuronal reorganization (By similarity).</text>
</comment>
<comment type="subunit">
    <text evidence="2">Monomer, dimer, and tetramer. Interacts with CXCR3 (via N-terminus).</text>
</comment>
<comment type="subcellular location">
    <subcellularLocation>
        <location evidence="2">Secreted</location>
    </subcellularLocation>
</comment>
<comment type="similarity">
    <text evidence="4">Belongs to the intercrine alpha (chemokine CxC) family.</text>
</comment>